<dbReference type="EMBL" id="AF338354">
    <property type="protein sequence ID" value="AAK77478.1"/>
    <property type="molecule type" value="Genomic_DNA"/>
</dbReference>
<dbReference type="EMBL" id="BA000041">
    <property type="protein sequence ID" value="BAC78182.1"/>
    <property type="molecule type" value="Genomic_DNA"/>
</dbReference>
<dbReference type="RefSeq" id="NP_001038963.1">
    <property type="nucleotide sequence ID" value="NM_001045498.1"/>
</dbReference>
<dbReference type="SMR" id="Q95IT3"/>
<dbReference type="FunCoup" id="Q95IT3">
    <property type="interactions" value="667"/>
</dbReference>
<dbReference type="STRING" id="9598.ENSPTRP00000093472"/>
<dbReference type="GlyCosmos" id="Q95IT3">
    <property type="glycosylation" value="1 site, No reported glycans"/>
</dbReference>
<dbReference type="PaxDb" id="9598-ENSPTRP00000054601"/>
<dbReference type="GeneID" id="462540"/>
<dbReference type="KEGG" id="ptr:462540"/>
<dbReference type="CTD" id="462540"/>
<dbReference type="eggNOG" id="ENOG502RQEK">
    <property type="taxonomic scope" value="Eukaryota"/>
</dbReference>
<dbReference type="HOGENOM" id="CLU_047501_1_1_1"/>
<dbReference type="InParanoid" id="Q95IT3"/>
<dbReference type="TreeFam" id="TF336617"/>
<dbReference type="Proteomes" id="UP000002277">
    <property type="component" value="Unplaced"/>
</dbReference>
<dbReference type="GO" id="GO:0009897">
    <property type="term" value="C:external side of plasma membrane"/>
    <property type="evidence" value="ECO:0000318"/>
    <property type="project" value="GO_Central"/>
</dbReference>
<dbReference type="GO" id="GO:0005615">
    <property type="term" value="C:extracellular space"/>
    <property type="evidence" value="ECO:0000318"/>
    <property type="project" value="GO_Central"/>
</dbReference>
<dbReference type="GO" id="GO:0042612">
    <property type="term" value="C:MHC class I protein complex"/>
    <property type="evidence" value="ECO:0007669"/>
    <property type="project" value="UniProtKB-KW"/>
</dbReference>
<dbReference type="GO" id="GO:0042605">
    <property type="term" value="F:peptide antigen binding"/>
    <property type="evidence" value="ECO:0000318"/>
    <property type="project" value="GO_Central"/>
</dbReference>
<dbReference type="GO" id="GO:0005102">
    <property type="term" value="F:signaling receptor binding"/>
    <property type="evidence" value="ECO:0000318"/>
    <property type="project" value="GO_Central"/>
</dbReference>
<dbReference type="GO" id="GO:0002486">
    <property type="term" value="P:antigen processing and presentation of endogenous peptide antigen via MHC class I via ER pathway, TAP-independent"/>
    <property type="evidence" value="ECO:0000318"/>
    <property type="project" value="GO_Central"/>
</dbReference>
<dbReference type="GO" id="GO:0002476">
    <property type="term" value="P:antigen processing and presentation of endogenous peptide antigen via MHC class Ib"/>
    <property type="evidence" value="ECO:0000318"/>
    <property type="project" value="GO_Central"/>
</dbReference>
<dbReference type="GO" id="GO:0006955">
    <property type="term" value="P:immune response"/>
    <property type="evidence" value="ECO:0000318"/>
    <property type="project" value="GO_Central"/>
</dbReference>
<dbReference type="GO" id="GO:0001916">
    <property type="term" value="P:positive regulation of T cell mediated cytotoxicity"/>
    <property type="evidence" value="ECO:0000318"/>
    <property type="project" value="GO_Central"/>
</dbReference>
<dbReference type="CDD" id="cd21024">
    <property type="entry name" value="IgC1_MHC_Ib_HLA-E"/>
    <property type="match status" value="1"/>
</dbReference>
<dbReference type="FunFam" id="2.60.40.10:FF:000014">
    <property type="entry name" value="H-2 class I histocompatibility antigen, alpha chain"/>
    <property type="match status" value="1"/>
</dbReference>
<dbReference type="FunFam" id="3.30.500.10:FF:000001">
    <property type="entry name" value="H-2 class I histocompatibility antigen, alpha chain"/>
    <property type="match status" value="1"/>
</dbReference>
<dbReference type="Gene3D" id="2.60.40.10">
    <property type="entry name" value="Immunoglobulins"/>
    <property type="match status" value="1"/>
</dbReference>
<dbReference type="Gene3D" id="3.30.500.10">
    <property type="entry name" value="MHC class I-like antigen recognition-like"/>
    <property type="match status" value="1"/>
</dbReference>
<dbReference type="InterPro" id="IPR007110">
    <property type="entry name" value="Ig-like_dom"/>
</dbReference>
<dbReference type="InterPro" id="IPR036179">
    <property type="entry name" value="Ig-like_dom_sf"/>
</dbReference>
<dbReference type="InterPro" id="IPR013783">
    <property type="entry name" value="Ig-like_fold"/>
</dbReference>
<dbReference type="InterPro" id="IPR003006">
    <property type="entry name" value="Ig/MHC_CS"/>
</dbReference>
<dbReference type="InterPro" id="IPR003597">
    <property type="entry name" value="Ig_C1-set"/>
</dbReference>
<dbReference type="InterPro" id="IPR050208">
    <property type="entry name" value="MHC_class-I_related"/>
</dbReference>
<dbReference type="InterPro" id="IPR011161">
    <property type="entry name" value="MHC_I-like_Ag-recog"/>
</dbReference>
<dbReference type="InterPro" id="IPR037055">
    <property type="entry name" value="MHC_I-like_Ag-recog_sf"/>
</dbReference>
<dbReference type="InterPro" id="IPR011162">
    <property type="entry name" value="MHC_I/II-like_Ag-recog"/>
</dbReference>
<dbReference type="InterPro" id="IPR001039">
    <property type="entry name" value="MHC_I_a_a1/a2"/>
</dbReference>
<dbReference type="PANTHER" id="PTHR16675:SF164">
    <property type="entry name" value="HLA CLASS I HISTOCOMPATIBILITY ANTIGEN, ALPHA CHAIN E"/>
    <property type="match status" value="1"/>
</dbReference>
<dbReference type="PANTHER" id="PTHR16675">
    <property type="entry name" value="MHC CLASS I-RELATED"/>
    <property type="match status" value="1"/>
</dbReference>
<dbReference type="Pfam" id="PF07654">
    <property type="entry name" value="C1-set"/>
    <property type="match status" value="1"/>
</dbReference>
<dbReference type="Pfam" id="PF00129">
    <property type="entry name" value="MHC_I"/>
    <property type="match status" value="1"/>
</dbReference>
<dbReference type="PRINTS" id="PR01638">
    <property type="entry name" value="MHCCLASSI"/>
</dbReference>
<dbReference type="SMART" id="SM00407">
    <property type="entry name" value="IGc1"/>
    <property type="match status" value="1"/>
</dbReference>
<dbReference type="SUPFAM" id="SSF48726">
    <property type="entry name" value="Immunoglobulin"/>
    <property type="match status" value="1"/>
</dbReference>
<dbReference type="SUPFAM" id="SSF54452">
    <property type="entry name" value="MHC antigen-recognition domain"/>
    <property type="match status" value="1"/>
</dbReference>
<dbReference type="PROSITE" id="PS50835">
    <property type="entry name" value="IG_LIKE"/>
    <property type="match status" value="1"/>
</dbReference>
<dbReference type="PROSITE" id="PS00290">
    <property type="entry name" value="IG_MHC"/>
    <property type="match status" value="1"/>
</dbReference>
<gene>
    <name type="primary">Patr-E</name>
</gene>
<sequence length="350" mass="39379">MVDGTLLLLLSEALALTQTWAGSHSLKYFHTSVSRPGRGEPRFISVGYVDDTQFVRFDNDAASPRMVPRAPWMEQEGSEYWDRETRSARDTAQIFRVNLRTLRGYYNQSEAGSHTLQWMHGCDLGPDGRFLRGYEQFAYDGKDYLTLNEDLRSWTAVDTAAQISERKSNDACEAEHQRAYLEDTCVEWLHKYLEKGKETLLHLEPPKTHVTHHPISDHEATLRCWALGFYPAEITLTWQQDGEGHTQDTELVDTRPAGDGTFQKWAAVVVPSGEEQRYTCHVQHEGLPEPLTLRWKPASQPTIPIVGIIAGLVLLGSVVSGAVVAAVMWRKKSSGGKGRSYSKAEWSDSA</sequence>
<proteinExistence type="inferred from homology"/>
<organism>
    <name type="scientific">Pan troglodytes</name>
    <name type="common">Chimpanzee</name>
    <dbReference type="NCBI Taxonomy" id="9598"/>
    <lineage>
        <taxon>Eukaryota</taxon>
        <taxon>Metazoa</taxon>
        <taxon>Chordata</taxon>
        <taxon>Craniata</taxon>
        <taxon>Vertebrata</taxon>
        <taxon>Euteleostomi</taxon>
        <taxon>Mammalia</taxon>
        <taxon>Eutheria</taxon>
        <taxon>Euarchontoglires</taxon>
        <taxon>Primates</taxon>
        <taxon>Haplorrhini</taxon>
        <taxon>Catarrhini</taxon>
        <taxon>Hominidae</taxon>
        <taxon>Pan</taxon>
    </lineage>
</organism>
<name>HLAE_PANTR</name>
<comment type="function">
    <text evidence="1">Preferably binds to a peptide derived from the signal sequence of most HLA-A, -B, -C and -G molecules.</text>
</comment>
<comment type="subunit">
    <text evidence="1">Heterodimer of an alpha chain and a beta chain (beta-2-microglobulin).</text>
</comment>
<comment type="subcellular location">
    <subcellularLocation>
        <location evidence="1">Membrane</location>
        <topology evidence="1">Single-pass type I membrane protein</topology>
    </subcellularLocation>
</comment>
<comment type="similarity">
    <text evidence="4">Belongs to the MHC class I family.</text>
</comment>
<protein>
    <recommendedName>
        <fullName>Patr class I histocompatibility antigen, alpha chain E</fullName>
    </recommendedName>
    <alternativeName>
        <fullName>MHC class I antigen E</fullName>
    </alternativeName>
</protein>
<evidence type="ECO:0000250" key="1"/>
<evidence type="ECO:0000255" key="2"/>
<evidence type="ECO:0000255" key="3">
    <source>
        <dbReference type="PROSITE-ProRule" id="PRU00114"/>
    </source>
</evidence>
<evidence type="ECO:0000305" key="4"/>
<accession>Q95IT3</accession>
<reference key="1">
    <citation type="journal article" date="2001" name="Immunogenetics">
        <title>Genomic analysis of common chimpanzee major histocompatibility complex class I genes.</title>
        <authorList>
            <person name="Adams E.J."/>
            <person name="Parham P."/>
        </authorList>
    </citation>
    <scope>NUCLEOTIDE SEQUENCE [GENOMIC DNA]</scope>
</reference>
<reference key="2">
    <citation type="journal article" date="2003" name="Proc. Natl. Acad. Sci. U.S.A.">
        <title>Comparative sequencing of human and chimpanzee MHC class I regions unveils insertions/deletions as the major path to genomic divergence.</title>
        <authorList>
            <person name="Anzai T."/>
            <person name="Shiina T."/>
            <person name="Kimura N."/>
            <person name="Yanagiya K."/>
            <person name="Kohara S."/>
            <person name="Shigenari A."/>
            <person name="Yamagata T."/>
            <person name="Kulski J.K."/>
            <person name="Naruse T.K."/>
            <person name="Fujimori Y."/>
            <person name="Fukuzumi Y."/>
            <person name="Yamazaki M."/>
            <person name="Tashiro H."/>
            <person name="Iwamoto C."/>
            <person name="Umehara Y."/>
            <person name="Imanishi T."/>
            <person name="Meyer A."/>
            <person name="Ikeo K."/>
            <person name="Gojobori T."/>
            <person name="Bahram S."/>
            <person name="Inoko H."/>
        </authorList>
    </citation>
    <scope>NUCLEOTIDE SEQUENCE [LARGE SCALE GENOMIC DNA]</scope>
</reference>
<feature type="signal peptide" evidence="1">
    <location>
        <begin position="1"/>
        <end position="21"/>
    </location>
</feature>
<feature type="chain" id="PRO_0000018883" description="Patr class I histocompatibility antigen, alpha chain E">
    <location>
        <begin position="22"/>
        <end position="350"/>
    </location>
</feature>
<feature type="topological domain" description="Extracellular" evidence="2">
    <location>
        <begin position="22"/>
        <end position="305"/>
    </location>
</feature>
<feature type="transmembrane region" description="Helical" evidence="2">
    <location>
        <begin position="306"/>
        <end position="329"/>
    </location>
</feature>
<feature type="topological domain" description="Cytoplasmic" evidence="2">
    <location>
        <begin position="330"/>
        <end position="350"/>
    </location>
</feature>
<feature type="domain" description="Ig-like C1-type">
    <location>
        <begin position="206"/>
        <end position="294"/>
    </location>
</feature>
<feature type="region of interest" description="Alpha-1">
    <location>
        <begin position="22"/>
        <end position="111"/>
    </location>
</feature>
<feature type="region of interest" description="Alpha-2">
    <location>
        <begin position="112"/>
        <end position="203"/>
    </location>
</feature>
<feature type="region of interest" description="Alpha-3">
    <location>
        <begin position="204"/>
        <end position="295"/>
    </location>
</feature>
<feature type="region of interest" description="Connecting peptide">
    <location>
        <begin position="296"/>
        <end position="305"/>
    </location>
</feature>
<feature type="glycosylation site" description="N-linked (GlcNAc...) asparagine" evidence="2">
    <location>
        <position position="107"/>
    </location>
</feature>
<feature type="disulfide bond" evidence="3">
    <location>
        <begin position="122"/>
        <end position="185"/>
    </location>
</feature>
<feature type="disulfide bond" evidence="3">
    <location>
        <begin position="224"/>
        <end position="280"/>
    </location>
</feature>
<keyword id="KW-1015">Disulfide bond</keyword>
<keyword id="KW-0325">Glycoprotein</keyword>
<keyword id="KW-0391">Immunity</keyword>
<keyword id="KW-0472">Membrane</keyword>
<keyword id="KW-0490">MHC I</keyword>
<keyword id="KW-1185">Reference proteome</keyword>
<keyword id="KW-0732">Signal</keyword>
<keyword id="KW-0812">Transmembrane</keyword>
<keyword id="KW-1133">Transmembrane helix</keyword>